<accession>P9WII0</accession>
<accession>L0T7C6</accession>
<accession>O06780</accession>
<accession>Q7D9G9</accession>
<proteinExistence type="inferred from homology"/>
<reference key="1">
    <citation type="journal article" date="2002" name="J. Bacteriol.">
        <title>Whole-genome comparison of Mycobacterium tuberculosis clinical and laboratory strains.</title>
        <authorList>
            <person name="Fleischmann R.D."/>
            <person name="Alland D."/>
            <person name="Eisen J.A."/>
            <person name="Carpenter L."/>
            <person name="White O."/>
            <person name="Peterson J.D."/>
            <person name="DeBoy R.T."/>
            <person name="Dodson R.J."/>
            <person name="Gwinn M.L."/>
            <person name="Haft D.H."/>
            <person name="Hickey E.K."/>
            <person name="Kolonay J.F."/>
            <person name="Nelson W.C."/>
            <person name="Umayam L.A."/>
            <person name="Ermolaeva M.D."/>
            <person name="Salzberg S.L."/>
            <person name="Delcher A."/>
            <person name="Utterback T.R."/>
            <person name="Weidman J.F."/>
            <person name="Khouri H.M."/>
            <person name="Gill J."/>
            <person name="Mikula A."/>
            <person name="Bishai W."/>
            <person name="Jacobs W.R. Jr."/>
            <person name="Venter J.C."/>
            <person name="Fraser C.M."/>
        </authorList>
    </citation>
    <scope>NUCLEOTIDE SEQUENCE [LARGE SCALE GENOMIC DNA]</scope>
    <source>
        <strain>CDC 1551 / Oshkosh</strain>
    </source>
</reference>
<gene>
    <name type="primary">mazF2</name>
    <name type="ordered locus">MT0688</name>
</gene>
<evidence type="ECO:0000250" key="1">
    <source>
        <dbReference type="UniProtKB" id="P9WII1"/>
    </source>
</evidence>
<evidence type="ECO:0000305" key="2"/>
<feature type="chain" id="PRO_0000428003" description="Probable endoribonuclease MazF2">
    <location>
        <begin position="1"/>
        <end position="102"/>
    </location>
</feature>
<protein>
    <recommendedName>
        <fullName>Probable endoribonuclease MazF2</fullName>
        <ecNumber>3.1.-.-</ecNumber>
    </recommendedName>
    <alternativeName>
        <fullName>Probable toxin MazF2</fullName>
    </alternativeName>
</protein>
<comment type="function">
    <text evidence="1">Toxic component of a type II toxin-antitoxin (TA) system. Acts as an endoribonuclease. Neutralized by coexpression with cognate antitoxin MazE2.</text>
</comment>
<comment type="subunit">
    <text evidence="1">Forms a complex with cognate antitoxin MazE2.</text>
</comment>
<comment type="similarity">
    <text evidence="2">Belongs to the PemK/MazF family.</text>
</comment>
<name>MAZF2_MYCTO</name>
<dbReference type="EC" id="3.1.-.-"/>
<dbReference type="EMBL" id="AE000516">
    <property type="protein sequence ID" value="AAK44913.1"/>
    <property type="molecule type" value="Genomic_DNA"/>
</dbReference>
<dbReference type="PIR" id="F70534">
    <property type="entry name" value="F70534"/>
</dbReference>
<dbReference type="RefSeq" id="WP_003403376.1">
    <property type="nucleotide sequence ID" value="NZ_KK341227.1"/>
</dbReference>
<dbReference type="SMR" id="P9WII0"/>
<dbReference type="KEGG" id="mtc:MT0688"/>
<dbReference type="PATRIC" id="fig|83331.31.peg.732"/>
<dbReference type="HOGENOM" id="CLU_174647_1_0_11"/>
<dbReference type="Proteomes" id="UP000001020">
    <property type="component" value="Chromosome"/>
</dbReference>
<dbReference type="GO" id="GO:0003677">
    <property type="term" value="F:DNA binding"/>
    <property type="evidence" value="ECO:0007669"/>
    <property type="project" value="InterPro"/>
</dbReference>
<dbReference type="GO" id="GO:0004521">
    <property type="term" value="F:RNA endonuclease activity"/>
    <property type="evidence" value="ECO:0007669"/>
    <property type="project" value="TreeGrafter"/>
</dbReference>
<dbReference type="GO" id="GO:0006402">
    <property type="term" value="P:mRNA catabolic process"/>
    <property type="evidence" value="ECO:0007669"/>
    <property type="project" value="TreeGrafter"/>
</dbReference>
<dbReference type="GO" id="GO:0016075">
    <property type="term" value="P:rRNA catabolic process"/>
    <property type="evidence" value="ECO:0007669"/>
    <property type="project" value="TreeGrafter"/>
</dbReference>
<dbReference type="Gene3D" id="2.30.30.110">
    <property type="match status" value="1"/>
</dbReference>
<dbReference type="InterPro" id="IPR003477">
    <property type="entry name" value="PemK-like"/>
</dbReference>
<dbReference type="InterPro" id="IPR011067">
    <property type="entry name" value="Plasmid_toxin/cell-grow_inhib"/>
</dbReference>
<dbReference type="PANTHER" id="PTHR33988:SF2">
    <property type="entry name" value="ENDORIBONUCLEASE MAZF"/>
    <property type="match status" value="1"/>
</dbReference>
<dbReference type="PANTHER" id="PTHR33988">
    <property type="entry name" value="ENDORIBONUCLEASE MAZF-RELATED"/>
    <property type="match status" value="1"/>
</dbReference>
<dbReference type="Pfam" id="PF02452">
    <property type="entry name" value="PemK_toxin"/>
    <property type="match status" value="1"/>
</dbReference>
<dbReference type="SUPFAM" id="SSF50118">
    <property type="entry name" value="Cell growth inhibitor/plasmid maintenance toxic component"/>
    <property type="match status" value="1"/>
</dbReference>
<organism>
    <name type="scientific">Mycobacterium tuberculosis (strain CDC 1551 / Oshkosh)</name>
    <dbReference type="NCBI Taxonomy" id="83331"/>
    <lineage>
        <taxon>Bacteria</taxon>
        <taxon>Bacillati</taxon>
        <taxon>Actinomycetota</taxon>
        <taxon>Actinomycetes</taxon>
        <taxon>Mycobacteriales</taxon>
        <taxon>Mycobacteriaceae</taxon>
        <taxon>Mycobacterium</taxon>
        <taxon>Mycobacterium tuberculosis complex</taxon>
    </lineage>
</organism>
<keyword id="KW-0255">Endonuclease</keyword>
<keyword id="KW-0378">Hydrolase</keyword>
<keyword id="KW-0540">Nuclease</keyword>
<keyword id="KW-1185">Reference proteome</keyword>
<keyword id="KW-1277">Toxin-antitoxin system</keyword>
<sequence>MRRGELWFAATPGGDRPVLVLTRDPVADRIGAVVVVALTRTRRGLVSELELTAVENRVPSDCVVNFDNIHTLPRTAFRRRITRLSPARLHEACQTLRASTGC</sequence>